<accession>Q23FE2</accession>
<gene>
    <name type="primary">TTLL3C</name>
    <name type="ORF">TTHERM_00378750</name>
</gene>
<dbReference type="EC" id="6.3.2.-"/>
<dbReference type="EMBL" id="GG662706">
    <property type="protein sequence ID" value="EAR95211.2"/>
    <property type="molecule type" value="Genomic_DNA"/>
</dbReference>
<dbReference type="RefSeq" id="XP_001015456.2">
    <property type="nucleotide sequence ID" value="XM_001015456.2"/>
</dbReference>
<dbReference type="SMR" id="Q23FE2"/>
<dbReference type="STRING" id="312017.Q23FE2"/>
<dbReference type="EnsemblProtists" id="EAR95211">
    <property type="protein sequence ID" value="EAR95211"/>
    <property type="gene ID" value="TTHERM_00378750"/>
</dbReference>
<dbReference type="GeneID" id="7828273"/>
<dbReference type="KEGG" id="tet:TTHERM_00378750"/>
<dbReference type="eggNOG" id="KOG1836">
    <property type="taxonomic scope" value="Eukaryota"/>
</dbReference>
<dbReference type="eggNOG" id="KOG2157">
    <property type="taxonomic scope" value="Eukaryota"/>
</dbReference>
<dbReference type="HOGENOM" id="CLU_285063_0_0_1"/>
<dbReference type="InParanoid" id="Q23FE2"/>
<dbReference type="OrthoDB" id="10255472at2759"/>
<dbReference type="Proteomes" id="UP000009168">
    <property type="component" value="Unassembled WGS sequence"/>
</dbReference>
<dbReference type="GO" id="GO:0005929">
    <property type="term" value="C:cilium"/>
    <property type="evidence" value="ECO:0000314"/>
    <property type="project" value="UniProtKB"/>
</dbReference>
<dbReference type="GO" id="GO:0005737">
    <property type="term" value="C:cytoplasm"/>
    <property type="evidence" value="ECO:0007669"/>
    <property type="project" value="UniProtKB-KW"/>
</dbReference>
<dbReference type="GO" id="GO:0015630">
    <property type="term" value="C:microtubule cytoskeleton"/>
    <property type="evidence" value="ECO:0007669"/>
    <property type="project" value="TreeGrafter"/>
</dbReference>
<dbReference type="GO" id="GO:0005524">
    <property type="term" value="F:ATP binding"/>
    <property type="evidence" value="ECO:0007669"/>
    <property type="project" value="UniProtKB-KW"/>
</dbReference>
<dbReference type="GO" id="GO:0070735">
    <property type="term" value="F:protein-glycine ligase activity"/>
    <property type="evidence" value="ECO:0000304"/>
    <property type="project" value="UniProtKB"/>
</dbReference>
<dbReference type="GO" id="GO:0070736">
    <property type="term" value="F:protein-glycine ligase activity, initiating"/>
    <property type="evidence" value="ECO:0007669"/>
    <property type="project" value="TreeGrafter"/>
</dbReference>
<dbReference type="GO" id="GO:0018094">
    <property type="term" value="P:protein polyglycylation"/>
    <property type="evidence" value="ECO:0000304"/>
    <property type="project" value="UniProtKB"/>
</dbReference>
<dbReference type="FunFam" id="3.30.470.20:FF:000032">
    <property type="entry name" value="tubulin monoglycylase TTLL3 isoform X2"/>
    <property type="match status" value="1"/>
</dbReference>
<dbReference type="Gene3D" id="3.30.470.20">
    <property type="entry name" value="ATP-grasp fold, B domain"/>
    <property type="match status" value="1"/>
</dbReference>
<dbReference type="InterPro" id="IPR004344">
    <property type="entry name" value="TTL/TTLL_fam"/>
</dbReference>
<dbReference type="InterPro" id="IPR051437">
    <property type="entry name" value="TTLL_monoglycylase"/>
</dbReference>
<dbReference type="PANTHER" id="PTHR45870">
    <property type="entry name" value="TUBULIN MONOGLYCYLASE TTLL3"/>
    <property type="match status" value="1"/>
</dbReference>
<dbReference type="PANTHER" id="PTHR45870:SF2">
    <property type="entry name" value="TUBULIN MONOGLYCYLASE TTLL3"/>
    <property type="match status" value="1"/>
</dbReference>
<dbReference type="Pfam" id="PF03133">
    <property type="entry name" value="TTL"/>
    <property type="match status" value="1"/>
</dbReference>
<dbReference type="SUPFAM" id="SSF56059">
    <property type="entry name" value="Glutathione synthetase ATP-binding domain-like"/>
    <property type="match status" value="1"/>
</dbReference>
<dbReference type="PROSITE" id="PS51221">
    <property type="entry name" value="TTL"/>
    <property type="match status" value="1"/>
</dbReference>
<name>TTL3C_TETTS</name>
<comment type="function">
    <text evidence="1">Probable glycylase which modifies tubulin, generating side chains of glycine on the gamma-carboxyl groups of specific glutamate residues within the C-terminal tail of tubulin.</text>
</comment>
<comment type="subcellular location">
    <subcellularLocation>
        <location evidence="5">Cell projection</location>
        <location evidence="5">Cilium</location>
    </subcellularLocation>
    <subcellularLocation>
        <location evidence="5">Cytoplasm</location>
        <location evidence="5">Cytoskeleton</location>
        <location evidence="5">Cilium axoneme</location>
    </subcellularLocation>
    <text>Mainly present in assembling locomotory cilia.</text>
</comment>
<comment type="disruption phenotype">
    <text evidence="5">Cells lacking TTLL3A, TTLL3B, TTLL3C, TTLL3D, TTLL3E and TTLL3F display shortened axonemes that are resistant to paclitaxel, indicating that tubulin glycylation changes the lattice properties of axonemal microtubules. Axonemes are however normal at the ultrastructural level.</text>
</comment>
<protein>
    <recommendedName>
        <fullName>Tubulin glycylase 3C</fullName>
        <ecNumber>6.3.2.-</ecNumber>
    </recommendedName>
</protein>
<proteinExistence type="inferred from homology"/>
<organism>
    <name type="scientific">Tetrahymena thermophila (strain SB210)</name>
    <dbReference type="NCBI Taxonomy" id="312017"/>
    <lineage>
        <taxon>Eukaryota</taxon>
        <taxon>Sar</taxon>
        <taxon>Alveolata</taxon>
        <taxon>Ciliophora</taxon>
        <taxon>Intramacronucleata</taxon>
        <taxon>Oligohymenophorea</taxon>
        <taxon>Hymenostomatida</taxon>
        <taxon>Tetrahymenina</taxon>
        <taxon>Tetrahymenidae</taxon>
        <taxon>Tetrahymena</taxon>
    </lineage>
</organism>
<reference key="1">
    <citation type="journal article" date="2006" name="PLoS Biol.">
        <title>Macronuclear genome sequence of the ciliate Tetrahymena thermophila, a model eukaryote.</title>
        <authorList>
            <person name="Eisen J.A."/>
            <person name="Coyne R.S."/>
            <person name="Wu M."/>
            <person name="Wu D."/>
            <person name="Thiagarajan M."/>
            <person name="Wortman J.R."/>
            <person name="Badger J.H."/>
            <person name="Ren Q."/>
            <person name="Amedeo P."/>
            <person name="Jones K.M."/>
            <person name="Tallon L.J."/>
            <person name="Delcher A.L."/>
            <person name="Salzberg S.L."/>
            <person name="Silva J.C."/>
            <person name="Haas B.J."/>
            <person name="Majoros W.H."/>
            <person name="Farzad M."/>
            <person name="Carlton J.M."/>
            <person name="Smith R.K. Jr."/>
            <person name="Garg J."/>
            <person name="Pearlman R.E."/>
            <person name="Karrer K.M."/>
            <person name="Sun L."/>
            <person name="Manning G."/>
            <person name="Elde N.C."/>
            <person name="Turkewitz A.P."/>
            <person name="Asai D.J."/>
            <person name="Wilkes D.E."/>
            <person name="Wang Y."/>
            <person name="Cai H."/>
            <person name="Collins K."/>
            <person name="Stewart B.A."/>
            <person name="Lee S.R."/>
            <person name="Wilamowska K."/>
            <person name="Weinberg Z."/>
            <person name="Ruzzo W.L."/>
            <person name="Wloga D."/>
            <person name="Gaertig J."/>
            <person name="Frankel J."/>
            <person name="Tsao C.-C."/>
            <person name="Gorovsky M.A."/>
            <person name="Keeling P.J."/>
            <person name="Waller R.F."/>
            <person name="Patron N.J."/>
            <person name="Cherry J.M."/>
            <person name="Stover N.A."/>
            <person name="Krieger C.J."/>
            <person name="del Toro C."/>
            <person name="Ryder H.F."/>
            <person name="Williamson S.C."/>
            <person name="Barbeau R.A."/>
            <person name="Hamilton E.P."/>
            <person name="Orias E."/>
        </authorList>
    </citation>
    <scope>NUCLEOTIDE SEQUENCE [LARGE SCALE GENOMIC DNA]</scope>
    <source>
        <strain>SB210</strain>
    </source>
</reference>
<reference key="2">
    <citation type="journal article" date="2009" name="Dev. Cell">
        <title>TTLL3 Is a tubulin glycine ligase that regulates the assembly of cilia.</title>
        <authorList>
            <person name="Wloga D."/>
            <person name="Webster D.M."/>
            <person name="Rogowski K."/>
            <person name="Bre M.-H."/>
            <person name="Levilliers N."/>
            <person name="Jerka-Dziadosz M."/>
            <person name="Janke C."/>
            <person name="Dougan S.T."/>
            <person name="Gaertig J."/>
        </authorList>
    </citation>
    <scope>SUBCELLULAR LOCATION</scope>
    <scope>DISRUPTION PHENOTYPE</scope>
</reference>
<keyword id="KW-0067">ATP-binding</keyword>
<keyword id="KW-0966">Cell projection</keyword>
<keyword id="KW-0969">Cilium</keyword>
<keyword id="KW-0963">Cytoplasm</keyword>
<keyword id="KW-0206">Cytoskeleton</keyword>
<keyword id="KW-0436">Ligase</keyword>
<keyword id="KW-0547">Nucleotide-binding</keyword>
<keyword id="KW-1185">Reference proteome</keyword>
<evidence type="ECO:0000250" key="1"/>
<evidence type="ECO:0000250" key="2">
    <source>
        <dbReference type="UniProtKB" id="Q6ZT98"/>
    </source>
</evidence>
<evidence type="ECO:0000255" key="3">
    <source>
        <dbReference type="PROSITE-ProRule" id="PRU00568"/>
    </source>
</evidence>
<evidence type="ECO:0000256" key="4">
    <source>
        <dbReference type="SAM" id="MobiDB-lite"/>
    </source>
</evidence>
<evidence type="ECO:0000269" key="5">
    <source>
    </source>
</evidence>
<sequence length="1065" mass="125946">MSSLDEGLKQMSQQEYRNEEQNQEGNQEDLNNQNDHNLNNNELDSLSSPPSDNYNEEEFEQEDDIKPDIKIYQNASQNNISQTQRISQTQLPQQQGGGGKRNSSLLQKEHYHQKNQEIIQKLMEKKKKEQEEKEKKELKLKKREDKLRKRMLEEAAKIREQKEVNLESQTEQSDHSNVTKSKKLKFKSVQDIYQLVVIQGKYQREQLTDKQQQELNEFESRLNEEKTTIIKMQQVYRSRQITFLEELKKKQEKKKQEEEQQKLKQEKIQTKLREQYENVNSNLYAETELFKQKKQEITKVSTQKQLVRASSAEGDKEKDDKKDIAKKIQQKNQEYIEKLKEKKRQEIAKEEEEKKKKEQLKEKMKDFVLVNIKKDIENGVFFVDVPEKKPKKEKKKNESKEDNIQITSPKLNSTKSLSSQITRKTNDAKKVEKLPKIKDSNKENHSKERNEDNEEGDDGEYECDEGDEGASDGEDEDDGNGSAIKRKLRKYPFITDLELWKKKQRLPADIKVFIVTGGYHDISKALKKRGWIANPDTKSPCYNFRWSLQTKDIDYENLKDFQIVNHFQKSACITTKVGLCKSLRNLVWHENVDIDTFYPRCFDLNDTEDFENFVEEFKSSKAESILKRYMRMYFEKDPDIEKIKKQAVIAFNVCERKMKELDEIIDDPNSIQLITKKEWNILSADELTEEKLAQKKYEQWLERIEGKNKQKPKKKKKKSKKDKQQGDTEKKEEEEGEAEDEEEDEEDEEEEEKQMDEFTLKVHQILKRYKVKYPQDCLTGEDNVWIIKPAGLSRGRGITCYNNLVEILDHVKSKESQWVIQKYIENPLIIKKRKFDIRVWILVTDWNPLTIWHYTDCYVRFSVDDYDTENLQNKFTHLTNNMVSKLKQRDEKDDITELGSMYFKENFINYLKEKEGYDVFTDKIEPQIVRAIIMSLKSVQDNIENRKNSIEMYGYDFMVDDLYNTWLIEINSSPSMEYSTPVTERLVKAVSEDIVKVVIDYGMEKSKKARKNIETGAFKRIYKGKYVEEKTNVVGLNLICEGVALKKGKKNSNVAKVNNLKPNFS</sequence>
<feature type="chain" id="PRO_0000381799" description="Tubulin glycylase 3C">
    <location>
        <begin position="1"/>
        <end position="1065"/>
    </location>
</feature>
<feature type="domain" description="TTL" evidence="3">
    <location>
        <begin position="633"/>
        <end position="1009"/>
    </location>
</feature>
<feature type="region of interest" description="Disordered" evidence="4">
    <location>
        <begin position="1"/>
        <end position="146"/>
    </location>
</feature>
<feature type="region of interest" description="Disordered" evidence="4">
    <location>
        <begin position="158"/>
        <end position="182"/>
    </location>
</feature>
<feature type="region of interest" description="Disordered" evidence="4">
    <location>
        <begin position="301"/>
        <end position="326"/>
    </location>
</feature>
<feature type="region of interest" description="Disordered" evidence="4">
    <location>
        <begin position="341"/>
        <end position="360"/>
    </location>
</feature>
<feature type="region of interest" description="Disordered" evidence="4">
    <location>
        <begin position="381"/>
        <end position="482"/>
    </location>
</feature>
<feature type="region of interest" description="Disordered" evidence="4">
    <location>
        <begin position="708"/>
        <end position="755"/>
    </location>
</feature>
<feature type="compositionally biased region" description="Low complexity" evidence="4">
    <location>
        <begin position="23"/>
        <end position="53"/>
    </location>
</feature>
<feature type="compositionally biased region" description="Acidic residues" evidence="4">
    <location>
        <begin position="54"/>
        <end position="63"/>
    </location>
</feature>
<feature type="compositionally biased region" description="Polar residues" evidence="4">
    <location>
        <begin position="73"/>
        <end position="92"/>
    </location>
</feature>
<feature type="compositionally biased region" description="Basic and acidic residues" evidence="4">
    <location>
        <begin position="122"/>
        <end position="146"/>
    </location>
</feature>
<feature type="compositionally biased region" description="Polar residues" evidence="4">
    <location>
        <begin position="166"/>
        <end position="179"/>
    </location>
</feature>
<feature type="compositionally biased region" description="Basic and acidic residues" evidence="4">
    <location>
        <begin position="313"/>
        <end position="326"/>
    </location>
</feature>
<feature type="compositionally biased region" description="Basic and acidic residues" evidence="4">
    <location>
        <begin position="385"/>
        <end position="403"/>
    </location>
</feature>
<feature type="compositionally biased region" description="Polar residues" evidence="4">
    <location>
        <begin position="404"/>
        <end position="423"/>
    </location>
</feature>
<feature type="compositionally biased region" description="Basic and acidic residues" evidence="4">
    <location>
        <begin position="424"/>
        <end position="450"/>
    </location>
</feature>
<feature type="compositionally biased region" description="Acidic residues" evidence="4">
    <location>
        <begin position="451"/>
        <end position="479"/>
    </location>
</feature>
<feature type="compositionally biased region" description="Basic residues" evidence="4">
    <location>
        <begin position="709"/>
        <end position="721"/>
    </location>
</feature>
<feature type="compositionally biased region" description="Basic and acidic residues" evidence="4">
    <location>
        <begin position="722"/>
        <end position="733"/>
    </location>
</feature>
<feature type="compositionally biased region" description="Acidic residues" evidence="4">
    <location>
        <begin position="734"/>
        <end position="754"/>
    </location>
</feature>
<feature type="binding site" evidence="2">
    <location>
        <begin position="821"/>
        <end position="824"/>
    </location>
    <ligand>
        <name>ATP</name>
        <dbReference type="ChEBI" id="CHEBI:30616"/>
    </ligand>
</feature>
<feature type="binding site" evidence="2">
    <location>
        <position position="834"/>
    </location>
    <ligand>
        <name>ATP</name>
        <dbReference type="ChEBI" id="CHEBI:30616"/>
    </ligand>
</feature>
<feature type="binding site" evidence="2">
    <location>
        <position position="836"/>
    </location>
    <ligand>
        <name>ATP</name>
        <dbReference type="ChEBI" id="CHEBI:30616"/>
    </ligand>
</feature>